<evidence type="ECO:0000250" key="1">
    <source>
        <dbReference type="UniProtKB" id="P29847"/>
    </source>
</evidence>
<evidence type="ECO:0000269" key="2">
    <source>
    </source>
</evidence>
<evidence type="ECO:0000305" key="3"/>
<evidence type="ECO:0007829" key="4">
    <source>
        <dbReference type="PDB" id="1T3D"/>
    </source>
</evidence>
<organism>
    <name type="scientific">Escherichia coli (strain K12)</name>
    <dbReference type="NCBI Taxonomy" id="83333"/>
    <lineage>
        <taxon>Bacteria</taxon>
        <taxon>Pseudomonadati</taxon>
        <taxon>Pseudomonadota</taxon>
        <taxon>Gammaproteobacteria</taxon>
        <taxon>Enterobacterales</taxon>
        <taxon>Enterobacteriaceae</taxon>
        <taxon>Escherichia</taxon>
    </lineage>
</organism>
<sequence length="273" mass="29317">MSCEELEIVWNNIKAEARTLADCEPMLASFYHATLLKHENLGSALSYMLANKLSSPIMPAIAIREVVEEAYAADPEMIASAACDIQAVRTRDPAVDKYSTPLLYLKGFHALQAYRIGHWLWNQGRRALAIFLQNQVSVTFQVDIHPAAKIGRGIMLDHATGIVVGETAVIENDVSILQSVTLGGTGKSGGDRHPKIREGVMIGAGAKILGNIEVGRGAKIGAGSVVLQPVPPHTTAAGVPARIVGKPDSDKPSMDMDQHFNGINHTFEYGDGI</sequence>
<name>CYSE_ECOLI</name>
<gene>
    <name type="primary">cysE</name>
    <name type="ordered locus">b3607</name>
    <name type="ordered locus">JW3582</name>
</gene>
<reference key="1">
    <citation type="journal article" date="1987" name="J. Gen. Microbiol.">
        <title>L-cysteine biosynthesis in Escherichia coli: nucleotide sequence and expression of the serine acetyltransferase (cysE) gene from the wild-type and a cysteine-excreting mutant.</title>
        <authorList>
            <person name="Denk D."/>
            <person name="Boeck A."/>
        </authorList>
    </citation>
    <scope>NUCLEOTIDE SEQUENCE [GENOMIC DNA]</scope>
</reference>
<reference key="2">
    <citation type="journal article" date="1990" name="Biochem. Biophys. Res. Commun.">
        <title>Structure and expression of cysX, the second gene in the Escherichia coli K-12 cysE locus.</title>
        <authorList>
            <person name="Tei H."/>
            <person name="Murata K."/>
            <person name="Kimura A."/>
        </authorList>
    </citation>
    <scope>NUCLEOTIDE SEQUENCE [GENOMIC DNA]</scope>
    <source>
        <strain>K12</strain>
    </source>
</reference>
<reference key="3">
    <citation type="journal article" date="1994" name="Nucleic Acids Res.">
        <title>Analysis of the Escherichia coli genome. V. DNA sequence of the region from 76.0 to 81.5 minutes.</title>
        <authorList>
            <person name="Sofia H.J."/>
            <person name="Burland V."/>
            <person name="Daniels D.L."/>
            <person name="Plunkett G. III"/>
            <person name="Blattner F.R."/>
        </authorList>
    </citation>
    <scope>NUCLEOTIDE SEQUENCE [LARGE SCALE GENOMIC DNA]</scope>
    <source>
        <strain>K12 / MG1655 / ATCC 47076</strain>
    </source>
</reference>
<reference key="4">
    <citation type="journal article" date="1997" name="Science">
        <title>The complete genome sequence of Escherichia coli K-12.</title>
        <authorList>
            <person name="Blattner F.R."/>
            <person name="Plunkett G. III"/>
            <person name="Bloch C.A."/>
            <person name="Perna N.T."/>
            <person name="Burland V."/>
            <person name="Riley M."/>
            <person name="Collado-Vides J."/>
            <person name="Glasner J.D."/>
            <person name="Rode C.K."/>
            <person name="Mayhew G.F."/>
            <person name="Gregor J."/>
            <person name="Davis N.W."/>
            <person name="Kirkpatrick H.A."/>
            <person name="Goeden M.A."/>
            <person name="Rose D.J."/>
            <person name="Mau B."/>
            <person name="Shao Y."/>
        </authorList>
    </citation>
    <scope>NUCLEOTIDE SEQUENCE [LARGE SCALE GENOMIC DNA]</scope>
    <source>
        <strain>K12 / MG1655 / ATCC 47076</strain>
    </source>
</reference>
<reference key="5">
    <citation type="journal article" date="2006" name="Mol. Syst. Biol.">
        <title>Highly accurate genome sequences of Escherichia coli K-12 strains MG1655 and W3110.</title>
        <authorList>
            <person name="Hayashi K."/>
            <person name="Morooka N."/>
            <person name="Yamamoto Y."/>
            <person name="Fujita K."/>
            <person name="Isono K."/>
            <person name="Choi S."/>
            <person name="Ohtsubo E."/>
            <person name="Baba T."/>
            <person name="Wanner B.L."/>
            <person name="Mori H."/>
            <person name="Horiuchi T."/>
        </authorList>
    </citation>
    <scope>NUCLEOTIDE SEQUENCE [LARGE SCALE GENOMIC DNA]</scope>
    <source>
        <strain>K12 / W3110 / ATCC 27325 / DSM 5911</strain>
    </source>
</reference>
<reference key="6">
    <citation type="journal article" date="1990" name="FEBS Lett.">
        <title>The serine acetyltransferase from Escherichia coli. Over-expression, purification and preliminary crystallographic analysis.</title>
        <authorList>
            <person name="Wigley D.B."/>
            <person name="Derrick J.P."/>
            <person name="Shaw W.V."/>
        </authorList>
    </citation>
    <scope>CHARACTERIZATION</scope>
</reference>
<reference key="7">
    <citation type="journal article" date="1997" name="Electrophoresis">
        <title>Escherichia coli proteome analysis using the gene-protein database.</title>
        <authorList>
            <person name="VanBogelen R.A."/>
            <person name="Abshire K.Z."/>
            <person name="Moldover B."/>
            <person name="Olson E.R."/>
            <person name="Neidhardt F.C."/>
        </authorList>
    </citation>
    <scope>IDENTIFICATION BY 2D-GEL</scope>
</reference>
<reference key="8">
    <citation type="journal article" date="2000" name="J. Biol. Chem.">
        <title>Serine acetyltransferase from Escherichia coli is a dimer of trimers.</title>
        <authorList>
            <person name="Hindson V.J."/>
            <person name="Moody P.C."/>
            <person name="Rowe A.J."/>
            <person name="Shaw W.V."/>
        </authorList>
    </citation>
    <scope>SUBUNIT</scope>
</reference>
<feature type="chain" id="PRO_0000068669" description="Serine acetyltransferase">
    <location>
        <begin position="1"/>
        <end position="273"/>
    </location>
</feature>
<feature type="helix" evidence="4">
    <location>
        <begin position="3"/>
        <end position="23"/>
    </location>
</feature>
<feature type="helix" evidence="4">
    <location>
        <begin position="25"/>
        <end position="27"/>
    </location>
</feature>
<feature type="helix" evidence="4">
    <location>
        <begin position="28"/>
        <end position="34"/>
    </location>
</feature>
<feature type="turn" evidence="4">
    <location>
        <begin position="35"/>
        <end position="37"/>
    </location>
</feature>
<feature type="helix" evidence="4">
    <location>
        <begin position="41"/>
        <end position="53"/>
    </location>
</feature>
<feature type="strand" evidence="4">
    <location>
        <begin position="56"/>
        <end position="58"/>
    </location>
</feature>
<feature type="helix" evidence="4">
    <location>
        <begin position="60"/>
        <end position="73"/>
    </location>
</feature>
<feature type="helix" evidence="4">
    <location>
        <begin position="76"/>
        <end position="91"/>
    </location>
</feature>
<feature type="helix" evidence="4">
    <location>
        <begin position="99"/>
        <end position="104"/>
    </location>
</feature>
<feature type="helix" evidence="4">
    <location>
        <begin position="106"/>
        <end position="123"/>
    </location>
</feature>
<feature type="helix" evidence="4">
    <location>
        <begin position="126"/>
        <end position="140"/>
    </location>
</feature>
<feature type="strand" evidence="4">
    <location>
        <begin position="181"/>
        <end position="183"/>
    </location>
</feature>
<feature type="strand" evidence="4">
    <location>
        <begin position="186"/>
        <end position="188"/>
    </location>
</feature>
<feature type="strand" evidence="4">
    <location>
        <begin position="207"/>
        <end position="211"/>
    </location>
</feature>
<feature type="strand" evidence="4">
    <location>
        <begin position="235"/>
        <end position="237"/>
    </location>
</feature>
<feature type="turn" evidence="4">
    <location>
        <begin position="238"/>
        <end position="241"/>
    </location>
</feature>
<feature type="strand" evidence="4">
    <location>
        <begin position="242"/>
        <end position="245"/>
    </location>
</feature>
<feature type="strand" evidence="4">
    <location>
        <begin position="248"/>
        <end position="250"/>
    </location>
</feature>
<feature type="helix" evidence="4">
    <location>
        <begin position="252"/>
        <end position="255"/>
    </location>
</feature>
<proteinExistence type="evidence at protein level"/>
<dbReference type="EC" id="2.3.1.30"/>
<dbReference type="EMBL" id="M15745">
    <property type="protein sequence ID" value="AAA23648.1"/>
    <property type="molecule type" value="Genomic_DNA"/>
</dbReference>
<dbReference type="EMBL" id="M34333">
    <property type="protein sequence ID" value="AAA23659.1"/>
    <property type="molecule type" value="Genomic_DNA"/>
</dbReference>
<dbReference type="EMBL" id="U00039">
    <property type="protein sequence ID" value="AAB18584.1"/>
    <property type="molecule type" value="Genomic_DNA"/>
</dbReference>
<dbReference type="EMBL" id="U00096">
    <property type="protein sequence ID" value="AAC76631.1"/>
    <property type="molecule type" value="Genomic_DNA"/>
</dbReference>
<dbReference type="EMBL" id="AP009048">
    <property type="protein sequence ID" value="BAE77685.1"/>
    <property type="molecule type" value="Genomic_DNA"/>
</dbReference>
<dbReference type="PIR" id="A27896">
    <property type="entry name" value="XYECSA"/>
</dbReference>
<dbReference type="RefSeq" id="NP_418064.1">
    <property type="nucleotide sequence ID" value="NC_000913.3"/>
</dbReference>
<dbReference type="RefSeq" id="WP_001277561.1">
    <property type="nucleotide sequence ID" value="NZ_STEB01000024.1"/>
</dbReference>
<dbReference type="PDB" id="1T3D">
    <property type="method" value="X-ray"/>
    <property type="resolution" value="2.20 A"/>
    <property type="chains" value="A/B/C=1-273"/>
</dbReference>
<dbReference type="PDBsum" id="1T3D"/>
<dbReference type="SASBDB" id="P0A9D4"/>
<dbReference type="SMR" id="P0A9D4"/>
<dbReference type="BioGRID" id="4259493">
    <property type="interactions" value="39"/>
</dbReference>
<dbReference type="ComplexPortal" id="CPX-3742">
    <property type="entry name" value="cysEK cysteine synthase complex"/>
</dbReference>
<dbReference type="DIP" id="DIP-9377N"/>
<dbReference type="FunCoup" id="P0A9D4">
    <property type="interactions" value="606"/>
</dbReference>
<dbReference type="IntAct" id="P0A9D4">
    <property type="interactions" value="2"/>
</dbReference>
<dbReference type="STRING" id="511145.b3607"/>
<dbReference type="jPOST" id="P0A9D4"/>
<dbReference type="PaxDb" id="511145-b3607"/>
<dbReference type="EnsemblBacteria" id="AAC76631">
    <property type="protein sequence ID" value="AAC76631"/>
    <property type="gene ID" value="b3607"/>
</dbReference>
<dbReference type="GeneID" id="93778321"/>
<dbReference type="GeneID" id="948126"/>
<dbReference type="KEGG" id="ecj:JW3582"/>
<dbReference type="KEGG" id="eco:b3607"/>
<dbReference type="KEGG" id="ecoc:C3026_19560"/>
<dbReference type="PATRIC" id="fig|1411691.4.peg.3099"/>
<dbReference type="EchoBASE" id="EB0184"/>
<dbReference type="eggNOG" id="COG1045">
    <property type="taxonomic scope" value="Bacteria"/>
</dbReference>
<dbReference type="HOGENOM" id="CLU_051638_0_1_6"/>
<dbReference type="InParanoid" id="P0A9D4"/>
<dbReference type="OMA" id="MPAIALR"/>
<dbReference type="OrthoDB" id="9801456at2"/>
<dbReference type="PhylomeDB" id="P0A9D4"/>
<dbReference type="BioCyc" id="EcoCyc:SERINE-O-ACETTRAN-MONOMER"/>
<dbReference type="BioCyc" id="MetaCyc:SERINE-O-ACETTRAN-MONOMER"/>
<dbReference type="BRENDA" id="2.3.1.30">
    <property type="organism ID" value="2026"/>
</dbReference>
<dbReference type="SABIO-RK" id="P0A9D4"/>
<dbReference type="UniPathway" id="UPA00136">
    <property type="reaction ID" value="UER00199"/>
</dbReference>
<dbReference type="EvolutionaryTrace" id="P0A9D4"/>
<dbReference type="PRO" id="PR:P0A9D4"/>
<dbReference type="Proteomes" id="UP000000625">
    <property type="component" value="Chromosome"/>
</dbReference>
<dbReference type="GO" id="GO:0009333">
    <property type="term" value="C:cysteine synthase complex"/>
    <property type="evidence" value="ECO:0000314"/>
    <property type="project" value="EcoCyc"/>
</dbReference>
<dbReference type="GO" id="GO:0005829">
    <property type="term" value="C:cytosol"/>
    <property type="evidence" value="ECO:0000314"/>
    <property type="project" value="EcoCyc"/>
</dbReference>
<dbReference type="GO" id="GO:0009001">
    <property type="term" value="F:serine O-acetyltransferase activity"/>
    <property type="evidence" value="ECO:0000314"/>
    <property type="project" value="EcoCyc"/>
</dbReference>
<dbReference type="GO" id="GO:0006535">
    <property type="term" value="P:cysteine biosynthetic process from serine"/>
    <property type="evidence" value="ECO:0000314"/>
    <property type="project" value="ComplexPortal"/>
</dbReference>
<dbReference type="GO" id="GO:0010165">
    <property type="term" value="P:response to X-ray"/>
    <property type="evidence" value="ECO:0000315"/>
    <property type="project" value="EcoCyc"/>
</dbReference>
<dbReference type="CDD" id="cd03354">
    <property type="entry name" value="LbH_SAT"/>
    <property type="match status" value="1"/>
</dbReference>
<dbReference type="FunFam" id="1.10.3130.10:FF:000001">
    <property type="entry name" value="Acetyltransferase"/>
    <property type="match status" value="1"/>
</dbReference>
<dbReference type="FunFam" id="2.160.10.10:FF:000002">
    <property type="entry name" value="Serine acetyltransferase"/>
    <property type="match status" value="1"/>
</dbReference>
<dbReference type="Gene3D" id="2.160.10.10">
    <property type="entry name" value="Hexapeptide repeat proteins"/>
    <property type="match status" value="1"/>
</dbReference>
<dbReference type="Gene3D" id="1.10.3130.10">
    <property type="entry name" value="serine acetyltransferase, domain 1"/>
    <property type="match status" value="1"/>
</dbReference>
<dbReference type="InterPro" id="IPR001451">
    <property type="entry name" value="Hexapep"/>
</dbReference>
<dbReference type="InterPro" id="IPR018357">
    <property type="entry name" value="Hexapep_transf_CS"/>
</dbReference>
<dbReference type="InterPro" id="IPR045304">
    <property type="entry name" value="LbH_SAT"/>
</dbReference>
<dbReference type="InterPro" id="IPR010493">
    <property type="entry name" value="Ser_AcTrfase_N"/>
</dbReference>
<dbReference type="InterPro" id="IPR042122">
    <property type="entry name" value="Ser_AcTrfase_N_sf"/>
</dbReference>
<dbReference type="InterPro" id="IPR005881">
    <property type="entry name" value="Ser_O-AcTrfase"/>
</dbReference>
<dbReference type="InterPro" id="IPR053376">
    <property type="entry name" value="Serine_acetyltransferase"/>
</dbReference>
<dbReference type="InterPro" id="IPR011004">
    <property type="entry name" value="Trimer_LpxA-like_sf"/>
</dbReference>
<dbReference type="NCBIfam" id="TIGR01172">
    <property type="entry name" value="cysE"/>
    <property type="match status" value="1"/>
</dbReference>
<dbReference type="NCBIfam" id="NF041874">
    <property type="entry name" value="EPS_EpsC"/>
    <property type="match status" value="1"/>
</dbReference>
<dbReference type="NCBIfam" id="NF008349">
    <property type="entry name" value="PRK11132.1"/>
    <property type="match status" value="1"/>
</dbReference>
<dbReference type="PANTHER" id="PTHR42811">
    <property type="entry name" value="SERINE ACETYLTRANSFERASE"/>
    <property type="match status" value="1"/>
</dbReference>
<dbReference type="Pfam" id="PF00132">
    <property type="entry name" value="Hexapep"/>
    <property type="match status" value="1"/>
</dbReference>
<dbReference type="Pfam" id="PF06426">
    <property type="entry name" value="SATase_N"/>
    <property type="match status" value="1"/>
</dbReference>
<dbReference type="SMART" id="SM00971">
    <property type="entry name" value="SATase_N"/>
    <property type="match status" value="1"/>
</dbReference>
<dbReference type="SUPFAM" id="SSF51161">
    <property type="entry name" value="Trimeric LpxA-like enzymes"/>
    <property type="match status" value="1"/>
</dbReference>
<dbReference type="PROSITE" id="PS00101">
    <property type="entry name" value="HEXAPEP_TRANSFERASES"/>
    <property type="match status" value="1"/>
</dbReference>
<comment type="catalytic activity">
    <reaction>
        <text>L-serine + acetyl-CoA = O-acetyl-L-serine + CoA</text>
        <dbReference type="Rhea" id="RHEA:24560"/>
        <dbReference type="ChEBI" id="CHEBI:33384"/>
        <dbReference type="ChEBI" id="CHEBI:57287"/>
        <dbReference type="ChEBI" id="CHEBI:57288"/>
        <dbReference type="ChEBI" id="CHEBI:58340"/>
        <dbReference type="EC" id="2.3.1.30"/>
    </reaction>
</comment>
<comment type="activity regulation">
    <text>Sensitive to feedback inhibition by L-cysteine.</text>
</comment>
<comment type="pathway">
    <text>Amino-acid biosynthesis; L-cysteine biosynthesis; L-cysteine from L-serine: step 1/2.</text>
</comment>
<comment type="subunit">
    <text evidence="1 2">Homohexamer; dimer of a homotrimer (PubMed:10617639). Forms a cysteine synthase complex with 2 copies of CysK (By similarity).</text>
</comment>
<comment type="interaction">
    <interactant intactId="EBI-1133237">
        <id>P0A9D4</id>
    </interactant>
    <interactant intactId="EBI-553933">
        <id>P0ABK5</id>
        <label>cysK</label>
    </interactant>
    <organismsDiffer>false</organismsDiffer>
    <experiments>4</experiments>
</comment>
<comment type="subcellular location">
    <subcellularLocation>
        <location>Cytoplasm</location>
    </subcellularLocation>
</comment>
<comment type="similarity">
    <text evidence="3">Belongs to the transferase hexapeptide repeat family.</text>
</comment>
<keyword id="KW-0002">3D-structure</keyword>
<keyword id="KW-0012">Acyltransferase</keyword>
<keyword id="KW-0028">Amino-acid biosynthesis</keyword>
<keyword id="KW-0198">Cysteine biosynthesis</keyword>
<keyword id="KW-0963">Cytoplasm</keyword>
<keyword id="KW-1185">Reference proteome</keyword>
<keyword id="KW-0677">Repeat</keyword>
<keyword id="KW-0808">Transferase</keyword>
<accession>P0A9D4</accession>
<accession>P05796</accession>
<accession>Q2M7S1</accession>
<protein>
    <recommendedName>
        <fullName>Serine acetyltransferase</fullName>
        <shortName>SAT</shortName>
        <ecNumber>2.3.1.30</ecNumber>
    </recommendedName>
</protein>